<name>RNC_STAAS</name>
<feature type="chain" id="PRO_0000180436" description="Ribonuclease 3">
    <location>
        <begin position="1"/>
        <end position="243"/>
    </location>
</feature>
<feature type="domain" description="RNase III" evidence="1">
    <location>
        <begin position="10"/>
        <end position="146"/>
    </location>
</feature>
<feature type="domain" description="DRBM" evidence="1">
    <location>
        <begin position="172"/>
        <end position="241"/>
    </location>
</feature>
<feature type="region of interest" description="Disordered" evidence="2">
    <location>
        <begin position="219"/>
        <end position="243"/>
    </location>
</feature>
<feature type="compositionally biased region" description="Basic and acidic residues" evidence="2">
    <location>
        <begin position="219"/>
        <end position="231"/>
    </location>
</feature>
<feature type="active site" evidence="1">
    <location>
        <position position="63"/>
    </location>
</feature>
<feature type="active site" evidence="1">
    <location>
        <position position="135"/>
    </location>
</feature>
<feature type="binding site" evidence="1">
    <location>
        <position position="59"/>
    </location>
    <ligand>
        <name>Mg(2+)</name>
        <dbReference type="ChEBI" id="CHEBI:18420"/>
    </ligand>
</feature>
<feature type="binding site" evidence="1">
    <location>
        <position position="132"/>
    </location>
    <ligand>
        <name>Mg(2+)</name>
        <dbReference type="ChEBI" id="CHEBI:18420"/>
    </ligand>
</feature>
<feature type="binding site" evidence="1">
    <location>
        <position position="135"/>
    </location>
    <ligand>
        <name>Mg(2+)</name>
        <dbReference type="ChEBI" id="CHEBI:18420"/>
    </ligand>
</feature>
<proteinExistence type="inferred from homology"/>
<reference key="1">
    <citation type="journal article" date="2004" name="Proc. Natl. Acad. Sci. U.S.A.">
        <title>Complete genomes of two clinical Staphylococcus aureus strains: evidence for the rapid evolution of virulence and drug resistance.</title>
        <authorList>
            <person name="Holden M.T.G."/>
            <person name="Feil E.J."/>
            <person name="Lindsay J.A."/>
            <person name="Peacock S.J."/>
            <person name="Day N.P.J."/>
            <person name="Enright M.C."/>
            <person name="Foster T.J."/>
            <person name="Moore C.E."/>
            <person name="Hurst L."/>
            <person name="Atkin R."/>
            <person name="Barron A."/>
            <person name="Bason N."/>
            <person name="Bentley S.D."/>
            <person name="Chillingworth C."/>
            <person name="Chillingworth T."/>
            <person name="Churcher C."/>
            <person name="Clark L."/>
            <person name="Corton C."/>
            <person name="Cronin A."/>
            <person name="Doggett J."/>
            <person name="Dowd L."/>
            <person name="Feltwell T."/>
            <person name="Hance Z."/>
            <person name="Harris B."/>
            <person name="Hauser H."/>
            <person name="Holroyd S."/>
            <person name="Jagels K."/>
            <person name="James K.D."/>
            <person name="Lennard N."/>
            <person name="Line A."/>
            <person name="Mayes R."/>
            <person name="Moule S."/>
            <person name="Mungall K."/>
            <person name="Ormond D."/>
            <person name="Quail M.A."/>
            <person name="Rabbinowitsch E."/>
            <person name="Rutherford K.M."/>
            <person name="Sanders M."/>
            <person name="Sharp S."/>
            <person name="Simmonds M."/>
            <person name="Stevens K."/>
            <person name="Whitehead S."/>
            <person name="Barrell B.G."/>
            <person name="Spratt B.G."/>
            <person name="Parkhill J."/>
        </authorList>
    </citation>
    <scope>NUCLEOTIDE SEQUENCE [LARGE SCALE GENOMIC DNA]</scope>
    <source>
        <strain>MSSA476</strain>
    </source>
</reference>
<evidence type="ECO:0000255" key="1">
    <source>
        <dbReference type="HAMAP-Rule" id="MF_00104"/>
    </source>
</evidence>
<evidence type="ECO:0000256" key="2">
    <source>
        <dbReference type="SAM" id="MobiDB-lite"/>
    </source>
</evidence>
<comment type="function">
    <text evidence="1">Digests double-stranded RNA. Involved in the processing of primary rRNA transcript to yield the immediate precursors to the large and small rRNAs (23S and 16S). Processes some mRNAs, and tRNAs when they are encoded in the rRNA operon. Processes pre-crRNA and tracrRNA of type II CRISPR loci if present in the organism.</text>
</comment>
<comment type="catalytic activity">
    <reaction evidence="1">
        <text>Endonucleolytic cleavage to 5'-phosphomonoester.</text>
        <dbReference type="EC" id="3.1.26.3"/>
    </reaction>
</comment>
<comment type="cofactor">
    <cofactor evidence="1">
        <name>Mg(2+)</name>
        <dbReference type="ChEBI" id="CHEBI:18420"/>
    </cofactor>
</comment>
<comment type="subunit">
    <text evidence="1">Homodimer.</text>
</comment>
<comment type="subcellular location">
    <subcellularLocation>
        <location evidence="1">Cytoplasm</location>
    </subcellularLocation>
</comment>
<comment type="similarity">
    <text evidence="1">Belongs to the ribonuclease III family.</text>
</comment>
<gene>
    <name evidence="1" type="primary">rnc</name>
    <name type="ordered locus">SAS1167</name>
</gene>
<sequence length="243" mass="27922">MSKQKKSEIVNRFRKRFDTKMTELGFTYQNIDLYQQAFSHSSFINDFNMNRLDHNERLEFLGDAVLELTVSRYLFDKHPNLPEGNLTKMRATIVCEPSLVIFANKIGLNEMILLGKGEEKTGGRTRPSLISDAFEAFIGALYLDQGLDIVWKFAEKVIFPHVEQNELLGVVDFKTQFQEYVHQQNKGDVTYNLIKEEGPAHHRLFTSEVILQGEAIAEGKGKTKKESEQRAAESAYKQLKQIK</sequence>
<organism>
    <name type="scientific">Staphylococcus aureus (strain MSSA476)</name>
    <dbReference type="NCBI Taxonomy" id="282459"/>
    <lineage>
        <taxon>Bacteria</taxon>
        <taxon>Bacillati</taxon>
        <taxon>Bacillota</taxon>
        <taxon>Bacilli</taxon>
        <taxon>Bacillales</taxon>
        <taxon>Staphylococcaceae</taxon>
        <taxon>Staphylococcus</taxon>
    </lineage>
</organism>
<accession>Q6G9Y0</accession>
<keyword id="KW-0963">Cytoplasm</keyword>
<keyword id="KW-0255">Endonuclease</keyword>
<keyword id="KW-0378">Hydrolase</keyword>
<keyword id="KW-0460">Magnesium</keyword>
<keyword id="KW-0479">Metal-binding</keyword>
<keyword id="KW-0507">mRNA processing</keyword>
<keyword id="KW-0540">Nuclease</keyword>
<keyword id="KW-0694">RNA-binding</keyword>
<keyword id="KW-0698">rRNA processing</keyword>
<keyword id="KW-0699">rRNA-binding</keyword>
<keyword id="KW-0819">tRNA processing</keyword>
<protein>
    <recommendedName>
        <fullName evidence="1">Ribonuclease 3</fullName>
        <ecNumber evidence="1">3.1.26.3</ecNumber>
    </recommendedName>
    <alternativeName>
        <fullName evidence="1">Ribonuclease III</fullName>
        <shortName evidence="1">RNase III</shortName>
    </alternativeName>
</protein>
<dbReference type="EC" id="3.1.26.3" evidence="1"/>
<dbReference type="EMBL" id="BX571857">
    <property type="protein sequence ID" value="CAG42944.1"/>
    <property type="molecule type" value="Genomic_DNA"/>
</dbReference>
<dbReference type="RefSeq" id="WP_000043237.1">
    <property type="nucleotide sequence ID" value="NC_002953.3"/>
</dbReference>
<dbReference type="SMR" id="Q6G9Y0"/>
<dbReference type="KEGG" id="sas:SAS1167"/>
<dbReference type="HOGENOM" id="CLU_000907_1_3_9"/>
<dbReference type="GO" id="GO:0005737">
    <property type="term" value="C:cytoplasm"/>
    <property type="evidence" value="ECO:0007669"/>
    <property type="project" value="UniProtKB-SubCell"/>
</dbReference>
<dbReference type="GO" id="GO:0003725">
    <property type="term" value="F:double-stranded RNA binding"/>
    <property type="evidence" value="ECO:0007669"/>
    <property type="project" value="TreeGrafter"/>
</dbReference>
<dbReference type="GO" id="GO:0046872">
    <property type="term" value="F:metal ion binding"/>
    <property type="evidence" value="ECO:0007669"/>
    <property type="project" value="UniProtKB-KW"/>
</dbReference>
<dbReference type="GO" id="GO:0004525">
    <property type="term" value="F:ribonuclease III activity"/>
    <property type="evidence" value="ECO:0007669"/>
    <property type="project" value="UniProtKB-UniRule"/>
</dbReference>
<dbReference type="GO" id="GO:0019843">
    <property type="term" value="F:rRNA binding"/>
    <property type="evidence" value="ECO:0007669"/>
    <property type="project" value="UniProtKB-KW"/>
</dbReference>
<dbReference type="GO" id="GO:0006397">
    <property type="term" value="P:mRNA processing"/>
    <property type="evidence" value="ECO:0007669"/>
    <property type="project" value="UniProtKB-UniRule"/>
</dbReference>
<dbReference type="GO" id="GO:0010468">
    <property type="term" value="P:regulation of gene expression"/>
    <property type="evidence" value="ECO:0007669"/>
    <property type="project" value="TreeGrafter"/>
</dbReference>
<dbReference type="GO" id="GO:0006364">
    <property type="term" value="P:rRNA processing"/>
    <property type="evidence" value="ECO:0007669"/>
    <property type="project" value="UniProtKB-UniRule"/>
</dbReference>
<dbReference type="GO" id="GO:0008033">
    <property type="term" value="P:tRNA processing"/>
    <property type="evidence" value="ECO:0007669"/>
    <property type="project" value="UniProtKB-KW"/>
</dbReference>
<dbReference type="CDD" id="cd10845">
    <property type="entry name" value="DSRM_RNAse_III_family"/>
    <property type="match status" value="1"/>
</dbReference>
<dbReference type="CDD" id="cd00593">
    <property type="entry name" value="RIBOc"/>
    <property type="match status" value="1"/>
</dbReference>
<dbReference type="FunFam" id="1.10.1520.10:FF:000001">
    <property type="entry name" value="Ribonuclease 3"/>
    <property type="match status" value="1"/>
</dbReference>
<dbReference type="FunFam" id="3.30.160.20:FF:000003">
    <property type="entry name" value="Ribonuclease 3"/>
    <property type="match status" value="1"/>
</dbReference>
<dbReference type="Gene3D" id="3.30.160.20">
    <property type="match status" value="1"/>
</dbReference>
<dbReference type="Gene3D" id="1.10.1520.10">
    <property type="entry name" value="Ribonuclease III domain"/>
    <property type="match status" value="1"/>
</dbReference>
<dbReference type="HAMAP" id="MF_00104">
    <property type="entry name" value="RNase_III"/>
    <property type="match status" value="1"/>
</dbReference>
<dbReference type="InterPro" id="IPR014720">
    <property type="entry name" value="dsRBD_dom"/>
</dbReference>
<dbReference type="InterPro" id="IPR011907">
    <property type="entry name" value="RNase_III"/>
</dbReference>
<dbReference type="InterPro" id="IPR000999">
    <property type="entry name" value="RNase_III_dom"/>
</dbReference>
<dbReference type="InterPro" id="IPR036389">
    <property type="entry name" value="RNase_III_sf"/>
</dbReference>
<dbReference type="NCBIfam" id="TIGR02191">
    <property type="entry name" value="RNaseIII"/>
    <property type="match status" value="1"/>
</dbReference>
<dbReference type="PANTHER" id="PTHR11207:SF0">
    <property type="entry name" value="RIBONUCLEASE 3"/>
    <property type="match status" value="1"/>
</dbReference>
<dbReference type="PANTHER" id="PTHR11207">
    <property type="entry name" value="RIBONUCLEASE III"/>
    <property type="match status" value="1"/>
</dbReference>
<dbReference type="Pfam" id="PF00035">
    <property type="entry name" value="dsrm"/>
    <property type="match status" value="1"/>
</dbReference>
<dbReference type="Pfam" id="PF14622">
    <property type="entry name" value="Ribonucleas_3_3"/>
    <property type="match status" value="1"/>
</dbReference>
<dbReference type="SMART" id="SM00358">
    <property type="entry name" value="DSRM"/>
    <property type="match status" value="1"/>
</dbReference>
<dbReference type="SMART" id="SM00535">
    <property type="entry name" value="RIBOc"/>
    <property type="match status" value="1"/>
</dbReference>
<dbReference type="SUPFAM" id="SSF54768">
    <property type="entry name" value="dsRNA-binding domain-like"/>
    <property type="match status" value="1"/>
</dbReference>
<dbReference type="SUPFAM" id="SSF69065">
    <property type="entry name" value="RNase III domain-like"/>
    <property type="match status" value="1"/>
</dbReference>
<dbReference type="PROSITE" id="PS50137">
    <property type="entry name" value="DS_RBD"/>
    <property type="match status" value="1"/>
</dbReference>
<dbReference type="PROSITE" id="PS00517">
    <property type="entry name" value="RNASE_3_1"/>
    <property type="match status" value="1"/>
</dbReference>
<dbReference type="PROSITE" id="PS50142">
    <property type="entry name" value="RNASE_3_2"/>
    <property type="match status" value="1"/>
</dbReference>